<comment type="function">
    <molecule>Pre-protein VI</molecule>
    <text evidence="1">During virus assembly, promotes hexon trimers nuclear import through nuclear pore complexes via an importin alpha/beta-dependent mechanism. By analogy to herpesviruses capsid assembly, might act as a chaperone to promote the formation of the icosahedral capsid.</text>
</comment>
<comment type="function">
    <molecule>Endosome lysis protein</molecule>
    <text evidence="1">Structural component of the virion that provides increased stability to the particle shell through its interaction with the core-capsid bridging protein and the hexon-linking protein VIII. Fibers shedding during virus entry into host cell allows the endosome lysis protein to be exposed as a membrane-lytic peptide. Exhibits pH-independent membrane fragmentation activity and probably mediates viral rapid escape from host endosome via organellar membrane lysis. It is not clear if it then remains partially associated with the capsid and involved in the intracellular microtubule-dependent transport of capsid to the nucleus, or if it is lost during endosomal penetration.</text>
</comment>
<comment type="function">
    <molecule>Protease cofactor</molecule>
    <text evidence="1">Cofactor that activates the viral protease. Binds to viral protease in a 1:1 ratio.</text>
</comment>
<comment type="subunit">
    <molecule>Pre-protein VI</molecule>
    <text evidence="1">Interacts with hexon protein; this interaction allows nuclear import of hexon trimers and possibly pre-capsid assembly. Interacts (via C-terminal NLS) with importin alpha/beta.</text>
</comment>
<comment type="subunit">
    <molecule>Endosome lysis protein</molecule>
    <text evidence="1">Interacts (via PPxY motif) with host NEDD4 ubiquitine ligase; this interaction might play a role in virus intracellular transport during entry. Part of a complex composed of the core-capsid bridging protein, the endosome lysis protein VI and the hexon-linking protein VIII; these interactions bridge the virus core to the capsid. Interacts with peripentonal hexons; this interaction stabilizes the capsid by gluing two peripentonal hexons together and joining them with an adjacent group-of-nine hexon.</text>
</comment>
<comment type="subunit">
    <molecule>Protease cofactor</molecule>
    <text evidence="1">Heterodimer with the viral protease; disulfide-linked. Interacts with the viral protease.</text>
</comment>
<comment type="subcellular location">
    <molecule>Pre-protein VI</molecule>
    <subcellularLocation>
        <location evidence="1">Host nucleus</location>
    </subcellularLocation>
    <subcellularLocation>
        <location evidence="1">Host cytoplasm</location>
    </subcellularLocation>
    <text evidence="1">Shuttles between host cytoplasm and nucleus.</text>
</comment>
<comment type="subcellular location">
    <molecule>Endosome lysis protein</molecule>
    <subcellularLocation>
        <location evidence="1">Virion</location>
    </subcellularLocation>
    <text evidence="1">Associates with the base of each peripentonal hexon on the capsid interior. Present in around 360 copies per virion.</text>
</comment>
<comment type="induction">
    <text evidence="1">Expressed in the late phase of the viral replicative cycle.</text>
</comment>
<comment type="domain">
    <text evidence="1">N-terminal amphipathic alpha-helix domain is essential for the membrane lytic activity.</text>
</comment>
<comment type="domain">
    <text evidence="1">Late-budding domains (L domains) are short sequence motifs essential for viral particle release. They can occur individually or in close proximity within structural proteins. They interacts with sorting cellular proteins of the multivesicular body (MVB) pathway. Most of these proteins are class E vacuolar protein sorting factors belonging to ESCRT-I, ESCRT-II or ESCRT-III complexes. Minor capsid protein 6 contains one L domain: a PPXY motif which binds to the WW domains of HECT (homologous to E6-AP C-terminus) E3 ubiquitin ligases, like NEDD4. In adenoviruses, this motif seems to play a role in microtubule-dependent intracellular trafficking toward the nucleus during virus entry into host cell and in suppression of DAXX-mediated repression of the immediate early E1A promoter.</text>
</comment>
<comment type="PTM">
    <text evidence="1">Ubiquitinated by Nedd4 following partial capsid disassembly; which might play a role in intracellular virus movement during entry.</text>
</comment>
<comment type="PTM">
    <molecule>Protease cofactor</molecule>
    <text evidence="1">Contains the major nuclear import and export signals. Proteolytically removed during virion maturation. The processing of the C-terminus turns the precursor into a mature viral structural protein and abrogates its ability to promote hexon import and act as a potential chaperone protein.</text>
</comment>
<comment type="miscellaneous">
    <text evidence="1">All late proteins expressed from the major late promoter are produced by alternative splicing and alternative polyadenylation of the same gene giving rise to non-overlapping ORFs. A leader sequence is present in the N-terminus of all these mRNAs and is recognized by the viral shutoff protein to provide expression although conventional translation via ribosome scanning from the cap has been shut off in the host cell.</text>
</comment>
<comment type="similarity">
    <text evidence="1">Belongs to the adenoviridae protein VI family.</text>
</comment>
<organismHost>
    <name type="scientific">Homo sapiens</name>
    <name type="common">Human</name>
    <dbReference type="NCBI Taxonomy" id="9606"/>
</organismHost>
<protein>
    <recommendedName>
        <fullName evidence="1">Pre-protein VI</fullName>
        <shortName evidence="1">pVI</shortName>
    </recommendedName>
    <component>
        <recommendedName>
            <fullName evidence="1">Endosome lysis protein</fullName>
        </recommendedName>
    </component>
    <component>
        <recommendedName>
            <fullName evidence="1">Protease cofactor</fullName>
        </recommendedName>
        <alternativeName>
            <fullName evidence="1">pVI-C</fullName>
        </alternativeName>
    </component>
</protein>
<feature type="chain" id="PRO_0000421427" description="Pre-protein VI" evidence="1">
    <location>
        <begin position="1"/>
        <end position="267"/>
    </location>
</feature>
<feature type="propeptide" id="PRO_0000036552" evidence="1">
    <location>
        <begin position="1"/>
        <end position="33"/>
    </location>
</feature>
<feature type="chain" id="PRO_0000036553" description="Endosome lysis protein" evidence="1">
    <location>
        <begin position="34"/>
        <end position="256"/>
    </location>
</feature>
<feature type="chain" id="PRO_0000036554" description="Protease cofactor" evidence="1">
    <location>
        <begin position="257"/>
        <end position="267"/>
    </location>
</feature>
<feature type="region of interest" description="Amphipathic alpha-helix essential for membrane lytic activity" evidence="1">
    <location>
        <begin position="34"/>
        <end position="54"/>
    </location>
</feature>
<feature type="region of interest" description="Involved in endosomal membrane lysis" evidence="1">
    <location>
        <begin position="36"/>
        <end position="53"/>
    </location>
</feature>
<feature type="region of interest" description="Interaction with hexon protein" evidence="1">
    <location>
        <begin position="48"/>
        <end position="74"/>
    </location>
</feature>
<feature type="region of interest" description="Disordered" evidence="2">
    <location>
        <begin position="107"/>
        <end position="184"/>
    </location>
</feature>
<feature type="region of interest" description="Disordered" evidence="2">
    <location>
        <begin position="199"/>
        <end position="230"/>
    </location>
</feature>
<feature type="region of interest" description="Interaction with hexon protein" evidence="1">
    <location>
        <begin position="250"/>
        <end position="256"/>
    </location>
</feature>
<feature type="region of interest" description="Binds to importin alpha/beta, involved in hexon nuclear import" evidence="1">
    <location>
        <begin position="257"/>
        <end position="267"/>
    </location>
</feature>
<feature type="short sequence motif" description="Nuclear export signal" evidence="1">
    <location>
        <begin position="67"/>
        <end position="76"/>
    </location>
</feature>
<feature type="short sequence motif" description="Nuclear localization signal" evidence="1">
    <location>
        <begin position="149"/>
        <end position="153"/>
    </location>
</feature>
<feature type="short sequence motif" description="PPXY motif" evidence="1">
    <location>
        <begin position="166"/>
        <end position="169"/>
    </location>
</feature>
<feature type="short sequence motif" description="Nuclear export signal" evidence="1">
    <location>
        <begin position="248"/>
        <end position="259"/>
    </location>
</feature>
<feature type="short sequence motif" description="Nuclear localization signal" evidence="1">
    <location>
        <begin position="262"/>
        <end position="265"/>
    </location>
</feature>
<feature type="compositionally biased region" description="Basic and acidic residues" evidence="2">
    <location>
        <begin position="123"/>
        <end position="135"/>
    </location>
</feature>
<feature type="compositionally biased region" description="Basic and acidic residues" evidence="2">
    <location>
        <begin position="146"/>
        <end position="155"/>
    </location>
</feature>
<feature type="compositionally biased region" description="Pro residues" evidence="2">
    <location>
        <begin position="205"/>
        <end position="217"/>
    </location>
</feature>
<feature type="compositionally biased region" description="Low complexity" evidence="2">
    <location>
        <begin position="218"/>
        <end position="230"/>
    </location>
</feature>
<feature type="site" description="Cleavage; by viral protease" evidence="1">
    <location>
        <begin position="33"/>
        <end position="34"/>
    </location>
</feature>
<feature type="site" description="Cleavage; by viral protease" evidence="1">
    <location>
        <begin position="256"/>
        <end position="257"/>
    </location>
</feature>
<feature type="disulfide bond" description="Interchain (with Adenovirus protease)" evidence="1">
    <location>
        <position position="266"/>
    </location>
</feature>
<reference key="1">
    <citation type="journal article" date="1993" name="J. Mol. Biol.">
        <title>The DNA sequence of adenovirus type 40.</title>
        <authorList>
            <person name="Davison A.J."/>
            <person name="Telford E.A."/>
            <person name="Watson M.S."/>
            <person name="McBride K."/>
            <person name="Mautner V."/>
        </authorList>
    </citation>
    <scope>NUCLEOTIDE SEQUENCE [LARGE SCALE GENOMIC DNA]</scope>
    <source>
        <strain>Dugan</strain>
    </source>
</reference>
<accession>P48309</accession>
<gene>
    <name evidence="1" type="primary">L3</name>
</gene>
<proteinExistence type="inferred from homology"/>
<name>CAP6_ADE40</name>
<dbReference type="EMBL" id="L19443">
    <property type="protein sequence ID" value="AAC13966.1"/>
    <property type="molecule type" value="Genomic_DNA"/>
</dbReference>
<dbReference type="RefSeq" id="NP_040861.1">
    <property type="nucleotide sequence ID" value="NC_001454.1"/>
</dbReference>
<dbReference type="SMR" id="P48309"/>
<dbReference type="DNASU" id="2715932"/>
<dbReference type="GeneID" id="2715932"/>
<dbReference type="Proteomes" id="UP000151954">
    <property type="component" value="Segment"/>
</dbReference>
<dbReference type="GO" id="GO:0043657">
    <property type="term" value="C:host cell"/>
    <property type="evidence" value="ECO:0007669"/>
    <property type="project" value="GOC"/>
</dbReference>
<dbReference type="GO" id="GO:0030430">
    <property type="term" value="C:host cell cytoplasm"/>
    <property type="evidence" value="ECO:0007669"/>
    <property type="project" value="UniProtKB-SubCell"/>
</dbReference>
<dbReference type="GO" id="GO:0042025">
    <property type="term" value="C:host cell nucleus"/>
    <property type="evidence" value="ECO:0007669"/>
    <property type="project" value="UniProtKB-SubCell"/>
</dbReference>
<dbReference type="GO" id="GO:0019028">
    <property type="term" value="C:viral capsid"/>
    <property type="evidence" value="ECO:0007669"/>
    <property type="project" value="UniProtKB-UniRule"/>
</dbReference>
<dbReference type="GO" id="GO:0046729">
    <property type="term" value="C:viral procapsid"/>
    <property type="evidence" value="ECO:0007669"/>
    <property type="project" value="UniProtKB-UniRule"/>
</dbReference>
<dbReference type="GO" id="GO:0039664">
    <property type="term" value="P:lysis of host organelle involved in viral entry into host cell"/>
    <property type="evidence" value="ECO:0007669"/>
    <property type="project" value="UniProtKB-UniRule"/>
</dbReference>
<dbReference type="GO" id="GO:0075521">
    <property type="term" value="P:microtubule-dependent intracellular transport of viral material towards nucleus"/>
    <property type="evidence" value="ECO:0007669"/>
    <property type="project" value="UniProtKB-UniRule"/>
</dbReference>
<dbReference type="GO" id="GO:0019076">
    <property type="term" value="P:viral release from host cell"/>
    <property type="evidence" value="ECO:0007669"/>
    <property type="project" value="UniProtKB-UniRule"/>
</dbReference>
<dbReference type="HAMAP" id="MF_04048">
    <property type="entry name" value="ADV_CAP6"/>
    <property type="match status" value="1"/>
</dbReference>
<dbReference type="InterPro" id="IPR004243">
    <property type="entry name" value="McpVI"/>
</dbReference>
<dbReference type="Pfam" id="PF02993">
    <property type="entry name" value="MCPVI"/>
    <property type="match status" value="1"/>
</dbReference>
<keyword id="KW-0167">Capsid protein</keyword>
<keyword id="KW-1176">Cytoplasmic inwards viral transport</keyword>
<keyword id="KW-1015">Disulfide bond</keyword>
<keyword id="KW-1035">Host cytoplasm</keyword>
<keyword id="KW-1048">Host nucleus</keyword>
<keyword id="KW-0945">Host-virus interaction</keyword>
<keyword id="KW-0426">Late protein</keyword>
<keyword id="KW-1177">Microtubular inwards viral transport</keyword>
<keyword id="KW-0597">Phosphoprotein</keyword>
<keyword id="KW-1185">Reference proteome</keyword>
<keyword id="KW-0832">Ubl conjugation</keyword>
<keyword id="KW-0118">Viral capsid assembly</keyword>
<keyword id="KW-1162">Viral penetration into host cytoplasm</keyword>
<keyword id="KW-1174">Viral penetration via lysis of host organellar membrane</keyword>
<keyword id="KW-1188">Viral release from host cell</keyword>
<keyword id="KW-0946">Virion</keyword>
<keyword id="KW-1160">Virus entry into host cell</keyword>
<sequence>MEDINFASLAPRHGSRPFMGTWNEIGTSQLNGGAFSWSSLWSGIKNFGSSIKSFGNKAWNSNTGQMLRDKLKDQNFQQKVVDGLASGINGVVDIANQALQNQINQRLENSRQPPVALQQRPPPKVEEVEVEEKLPPLEVAPPLPSKGEKRPRPDLEETLVVESREPPSYEQALKEGASPYPMTKPIGSMARPVYGKESKPVTLELPPPVPTVPPMPAPTLGTAVSRPTAPTVAVATPARRPRGANWQSTLNSIVGLGVKSLKRRRCY</sequence>
<organism>
    <name type="scientific">Human adenovirus F serotype 40</name>
    <name type="common">HAdV-40</name>
    <name type="synonym">Human adenovirus 40</name>
    <dbReference type="NCBI Taxonomy" id="28284"/>
    <lineage>
        <taxon>Viruses</taxon>
        <taxon>Varidnaviria</taxon>
        <taxon>Bamfordvirae</taxon>
        <taxon>Preplasmiviricota</taxon>
        <taxon>Tectiliviricetes</taxon>
        <taxon>Rowavirales</taxon>
        <taxon>Adenoviridae</taxon>
        <taxon>Mastadenovirus</taxon>
        <taxon>Human mastadenovirus F</taxon>
    </lineage>
</organism>
<evidence type="ECO:0000255" key="1">
    <source>
        <dbReference type="HAMAP-Rule" id="MF_04048"/>
    </source>
</evidence>
<evidence type="ECO:0000256" key="2">
    <source>
        <dbReference type="SAM" id="MobiDB-lite"/>
    </source>
</evidence>